<organism>
    <name type="scientific">Chlamydia trachomatis serovar D (strain ATCC VR-885 / DSM 19411 / UW-3/Cx)</name>
    <dbReference type="NCBI Taxonomy" id="272561"/>
    <lineage>
        <taxon>Bacteria</taxon>
        <taxon>Pseudomonadati</taxon>
        <taxon>Chlamydiota</taxon>
        <taxon>Chlamydiia</taxon>
        <taxon>Chlamydiales</taxon>
        <taxon>Chlamydiaceae</taxon>
        <taxon>Chlamydia/Chlamydophila group</taxon>
        <taxon>Chlamydia</taxon>
    </lineage>
</organism>
<sequence>MSHLFSKACQYFPGGVNSPVRACRAVNITPPIVARASKEVFVDSLDKTFIDFCGSWGSLIHGHSHPKICTAIRQGLERGSSYGLTSEQEILFAEEIFSYLGLETNYKIRFMSTGSEATMTAVRLARGITGRPIIIKFLGCYHGHADTFLQEKPFSHTSLETLDLAHPLTLSLPFNDFPLFQTVMNSLGHKVAGVIFEPVCANMGVILPVPGFIEGVIQTCQQTGSFSIMDEVVTGFRVAQGGAAALYHVKPDILVFGKILGGGLPASAVVTPKDIMDHLAPEGKIFQAGTLSGNPLAMIAGKVSVNLCREQGFYTQLATIEQNFLSPIEHMIRTTGIPVTLVRYGSLFSFFFNPNRPNNLADAQLSDIEAFQKFYQSAFSKGVYLSPSPFEASFLSAAHSMESLDYAQTALIESLEQVFSLV</sequence>
<gene>
    <name evidence="1" type="primary">hemL</name>
    <name type="ordered locus">CT_210</name>
</gene>
<comment type="catalytic activity">
    <reaction evidence="1">
        <text>(S)-4-amino-5-oxopentanoate = 5-aminolevulinate</text>
        <dbReference type="Rhea" id="RHEA:14265"/>
        <dbReference type="ChEBI" id="CHEBI:57501"/>
        <dbReference type="ChEBI" id="CHEBI:356416"/>
        <dbReference type="EC" id="5.4.3.8"/>
    </reaction>
</comment>
<comment type="cofactor">
    <cofactor evidence="1">
        <name>pyridoxal 5'-phosphate</name>
        <dbReference type="ChEBI" id="CHEBI:597326"/>
    </cofactor>
</comment>
<comment type="pathway">
    <text evidence="1">Porphyrin-containing compound metabolism; protoporphyrin-IX biosynthesis; 5-aminolevulinate from L-glutamyl-tRNA(Glu): step 2/2.</text>
</comment>
<comment type="subunit">
    <text evidence="1">Homodimer.</text>
</comment>
<comment type="subcellular location">
    <subcellularLocation>
        <location evidence="1">Cytoplasm</location>
    </subcellularLocation>
</comment>
<comment type="similarity">
    <text evidence="1">Belongs to the class-III pyridoxal-phosphate-dependent aminotransferase family. HemL subfamily.</text>
</comment>
<keyword id="KW-0963">Cytoplasm</keyword>
<keyword id="KW-0413">Isomerase</keyword>
<keyword id="KW-0627">Porphyrin biosynthesis</keyword>
<keyword id="KW-0663">Pyridoxal phosphate</keyword>
<keyword id="KW-1185">Reference proteome</keyword>
<proteinExistence type="inferred from homology"/>
<accession>O84212</accession>
<protein>
    <recommendedName>
        <fullName evidence="1">Glutamate-1-semialdehyde 2,1-aminomutase</fullName>
        <shortName evidence="1">GSA</shortName>
        <ecNumber evidence="1">5.4.3.8</ecNumber>
    </recommendedName>
    <alternativeName>
        <fullName evidence="1">Glutamate-1-semialdehyde aminotransferase</fullName>
        <shortName evidence="1">GSA-AT</shortName>
    </alternativeName>
</protein>
<feature type="chain" id="PRO_0000120400" description="Glutamate-1-semialdehyde 2,1-aminomutase">
    <location>
        <begin position="1"/>
        <end position="422"/>
    </location>
</feature>
<feature type="modified residue" description="N6-(pyridoxal phosphate)lysine" evidence="1">
    <location>
        <position position="258"/>
    </location>
</feature>
<evidence type="ECO:0000255" key="1">
    <source>
        <dbReference type="HAMAP-Rule" id="MF_00375"/>
    </source>
</evidence>
<reference key="1">
    <citation type="journal article" date="1998" name="Science">
        <title>Genome sequence of an obligate intracellular pathogen of humans: Chlamydia trachomatis.</title>
        <authorList>
            <person name="Stephens R.S."/>
            <person name="Kalman S."/>
            <person name="Lammel C.J."/>
            <person name="Fan J."/>
            <person name="Marathe R."/>
            <person name="Aravind L."/>
            <person name="Mitchell W.P."/>
            <person name="Olinger L."/>
            <person name="Tatusov R.L."/>
            <person name="Zhao Q."/>
            <person name="Koonin E.V."/>
            <person name="Davis R.W."/>
        </authorList>
    </citation>
    <scope>NUCLEOTIDE SEQUENCE [LARGE SCALE GENOMIC DNA]</scope>
    <source>
        <strain>ATCC VR-885 / DSM 19411 / UW-3/Cx</strain>
    </source>
</reference>
<dbReference type="EC" id="5.4.3.8" evidence="1"/>
<dbReference type="EMBL" id="AE001273">
    <property type="protein sequence ID" value="AAC67802.1"/>
    <property type="molecule type" value="Genomic_DNA"/>
</dbReference>
<dbReference type="PIR" id="A71542">
    <property type="entry name" value="A71542"/>
</dbReference>
<dbReference type="RefSeq" id="NP_219714.1">
    <property type="nucleotide sequence ID" value="NC_000117.1"/>
</dbReference>
<dbReference type="RefSeq" id="WP_009871556.1">
    <property type="nucleotide sequence ID" value="NC_000117.1"/>
</dbReference>
<dbReference type="SMR" id="O84212"/>
<dbReference type="FunCoup" id="O84212">
    <property type="interactions" value="253"/>
</dbReference>
<dbReference type="STRING" id="272561.CT_210"/>
<dbReference type="EnsemblBacteria" id="AAC67802">
    <property type="protein sequence ID" value="AAC67802"/>
    <property type="gene ID" value="CT_210"/>
</dbReference>
<dbReference type="GeneID" id="884916"/>
<dbReference type="KEGG" id="ctr:CT_210"/>
<dbReference type="PATRIC" id="fig|272561.5.peg.225"/>
<dbReference type="HOGENOM" id="CLU_016922_1_5_0"/>
<dbReference type="InParanoid" id="O84212"/>
<dbReference type="OrthoDB" id="9807885at2"/>
<dbReference type="UniPathway" id="UPA00251">
    <property type="reaction ID" value="UER00317"/>
</dbReference>
<dbReference type="Proteomes" id="UP000000431">
    <property type="component" value="Chromosome"/>
</dbReference>
<dbReference type="GO" id="GO:0005737">
    <property type="term" value="C:cytoplasm"/>
    <property type="evidence" value="ECO:0007669"/>
    <property type="project" value="UniProtKB-SubCell"/>
</dbReference>
<dbReference type="GO" id="GO:0042286">
    <property type="term" value="F:glutamate-1-semialdehyde 2,1-aminomutase activity"/>
    <property type="evidence" value="ECO:0007669"/>
    <property type="project" value="UniProtKB-UniRule"/>
</dbReference>
<dbReference type="GO" id="GO:0030170">
    <property type="term" value="F:pyridoxal phosphate binding"/>
    <property type="evidence" value="ECO:0007669"/>
    <property type="project" value="InterPro"/>
</dbReference>
<dbReference type="GO" id="GO:0008483">
    <property type="term" value="F:transaminase activity"/>
    <property type="evidence" value="ECO:0007669"/>
    <property type="project" value="InterPro"/>
</dbReference>
<dbReference type="GO" id="GO:0006782">
    <property type="term" value="P:protoporphyrinogen IX biosynthetic process"/>
    <property type="evidence" value="ECO:0007669"/>
    <property type="project" value="UniProtKB-UniRule"/>
</dbReference>
<dbReference type="CDD" id="cd00610">
    <property type="entry name" value="OAT_like"/>
    <property type="match status" value="1"/>
</dbReference>
<dbReference type="Gene3D" id="3.90.1150.10">
    <property type="entry name" value="Aspartate Aminotransferase, domain 1"/>
    <property type="match status" value="1"/>
</dbReference>
<dbReference type="Gene3D" id="3.40.640.10">
    <property type="entry name" value="Type I PLP-dependent aspartate aminotransferase-like (Major domain)"/>
    <property type="match status" value="1"/>
</dbReference>
<dbReference type="HAMAP" id="MF_00375">
    <property type="entry name" value="HemL_aminotrans_3"/>
    <property type="match status" value="1"/>
</dbReference>
<dbReference type="InterPro" id="IPR004639">
    <property type="entry name" value="4pyrrol_synth_GluAld_NH2Trfase"/>
</dbReference>
<dbReference type="InterPro" id="IPR005814">
    <property type="entry name" value="Aminotrans_3"/>
</dbReference>
<dbReference type="InterPro" id="IPR049704">
    <property type="entry name" value="Aminotrans_3_PPA_site"/>
</dbReference>
<dbReference type="InterPro" id="IPR015424">
    <property type="entry name" value="PyrdxlP-dep_Trfase"/>
</dbReference>
<dbReference type="InterPro" id="IPR015421">
    <property type="entry name" value="PyrdxlP-dep_Trfase_major"/>
</dbReference>
<dbReference type="InterPro" id="IPR015422">
    <property type="entry name" value="PyrdxlP-dep_Trfase_small"/>
</dbReference>
<dbReference type="NCBIfam" id="TIGR00713">
    <property type="entry name" value="hemL"/>
    <property type="match status" value="1"/>
</dbReference>
<dbReference type="NCBIfam" id="NF000818">
    <property type="entry name" value="PRK00062.1"/>
    <property type="match status" value="1"/>
</dbReference>
<dbReference type="NCBIfam" id="NF001864">
    <property type="entry name" value="PRK00615.1"/>
    <property type="match status" value="1"/>
</dbReference>
<dbReference type="PANTHER" id="PTHR43713">
    <property type="entry name" value="GLUTAMATE-1-SEMIALDEHYDE 2,1-AMINOMUTASE"/>
    <property type="match status" value="1"/>
</dbReference>
<dbReference type="PANTHER" id="PTHR43713:SF3">
    <property type="entry name" value="GLUTAMATE-1-SEMIALDEHYDE 2,1-AMINOMUTASE 1, CHLOROPLASTIC-RELATED"/>
    <property type="match status" value="1"/>
</dbReference>
<dbReference type="Pfam" id="PF00202">
    <property type="entry name" value="Aminotran_3"/>
    <property type="match status" value="1"/>
</dbReference>
<dbReference type="SUPFAM" id="SSF53383">
    <property type="entry name" value="PLP-dependent transferases"/>
    <property type="match status" value="1"/>
</dbReference>
<dbReference type="PROSITE" id="PS00600">
    <property type="entry name" value="AA_TRANSFER_CLASS_3"/>
    <property type="match status" value="1"/>
</dbReference>
<name>GSA_CHLTR</name>